<organism>
    <name type="scientific">Camelus dromedarius</name>
    <name type="common">Dromedary</name>
    <name type="synonym">Arabian camel</name>
    <dbReference type="NCBI Taxonomy" id="9838"/>
    <lineage>
        <taxon>Eukaryota</taxon>
        <taxon>Metazoa</taxon>
        <taxon>Chordata</taxon>
        <taxon>Craniata</taxon>
        <taxon>Vertebrata</taxon>
        <taxon>Euteleostomi</taxon>
        <taxon>Mammalia</taxon>
        <taxon>Eutheria</taxon>
        <taxon>Laurasiatheria</taxon>
        <taxon>Artiodactyla</taxon>
        <taxon>Tylopoda</taxon>
        <taxon>Camelidae</taxon>
        <taxon>Camelus</taxon>
    </lineage>
</organism>
<evidence type="ECO:0000250" key="1"/>
<evidence type="ECO:0000256" key="2">
    <source>
        <dbReference type="SAM" id="MobiDB-lite"/>
    </source>
</evidence>
<evidence type="ECO:0000269" key="3">
    <source>
    </source>
</evidence>
<evidence type="ECO:0000305" key="4"/>
<name>RNAS1_CAMDR</name>
<feature type="chain" id="PRO_0000057185" description="Ribonuclease pancreatic">
    <location>
        <begin position="1"/>
        <end position="124"/>
    </location>
</feature>
<feature type="region of interest" description="Disordered" evidence="2">
    <location>
        <begin position="1"/>
        <end position="23"/>
    </location>
</feature>
<feature type="compositionally biased region" description="Basic and acidic residues" evidence="2">
    <location>
        <begin position="1"/>
        <end position="13"/>
    </location>
</feature>
<feature type="active site" description="Proton acceptor" evidence="1">
    <location>
        <position position="12"/>
    </location>
</feature>
<feature type="active site" description="Proton donor" evidence="1">
    <location>
        <position position="119"/>
    </location>
</feature>
<feature type="binding site" evidence="1">
    <location>
        <position position="7"/>
    </location>
    <ligand>
        <name>substrate</name>
    </ligand>
</feature>
<feature type="binding site" evidence="1">
    <location>
        <position position="10"/>
    </location>
    <ligand>
        <name>substrate</name>
    </ligand>
</feature>
<feature type="binding site" evidence="1">
    <location>
        <begin position="41"/>
        <end position="45"/>
    </location>
    <ligand>
        <name>substrate</name>
    </ligand>
</feature>
<feature type="binding site" evidence="1">
    <location>
        <position position="66"/>
    </location>
    <ligand>
        <name>substrate</name>
    </ligand>
</feature>
<feature type="binding site" evidence="1">
    <location>
        <position position="85"/>
    </location>
    <ligand>
        <name>substrate</name>
    </ligand>
</feature>
<feature type="disulfide bond" evidence="1">
    <location>
        <begin position="26"/>
        <end position="84"/>
    </location>
</feature>
<feature type="disulfide bond" evidence="1">
    <location>
        <begin position="40"/>
        <end position="95"/>
    </location>
</feature>
<feature type="disulfide bond" evidence="1">
    <location>
        <begin position="58"/>
        <end position="110"/>
    </location>
</feature>
<feature type="disulfide bond" evidence="1">
    <location>
        <begin position="65"/>
        <end position="72"/>
    </location>
</feature>
<feature type="sequence variant" description="In 25% of the molecules." evidence="3">
    <original>K</original>
    <variation>Q</variation>
    <location>
        <position position="103"/>
    </location>
</feature>
<protein>
    <recommendedName>
        <fullName>Ribonuclease pancreatic</fullName>
        <ecNumber>4.6.1.18</ecNumber>
    </recommendedName>
    <alternativeName>
        <fullName>RNase 1</fullName>
    </alternativeName>
    <alternativeName>
        <fullName>RNase A</fullName>
    </alternativeName>
</protein>
<gene>
    <name type="primary">RNASE1</name>
    <name type="synonym">RNS1</name>
</gene>
<proteinExistence type="evidence at protein level"/>
<reference key="1">
    <citation type="journal article" date="1975" name="Biochem. J.">
        <title>The amino acid sequence of dromedary pancreatic ribonuclease.</title>
        <authorList>
            <person name="Welling G.W."/>
            <person name="Groen G."/>
            <person name="Beintema J.J."/>
        </authorList>
    </citation>
    <scope>PROTEIN SEQUENCE</scope>
</reference>
<reference key="2">
    <citation type="journal article" date="1985" name="FEBS Lett.">
        <title>Mammalian ribonucleases. The absence of a glycosylated Asn-Pro-Thr sequence in horse ribonuclease and the presence of tryptophan at position 39 in horse and dromedary ribonuclease.</title>
        <authorList>
            <person name="Beintema J.J."/>
        </authorList>
    </citation>
    <scope>PARTIAL PROTEIN SEQUENCE</scope>
    <scope>SEQUENCE REVISION</scope>
</reference>
<reference key="3">
    <citation type="journal article" date="1976" name="Biochem. Genet.">
        <title>Allelic polymorphism in arabian camel ribonuclease and the amino acid sequence of bactrian camel ribonuclease.</title>
        <authorList>
            <person name="Welling G.W."/>
            <person name="Mulder H."/>
            <person name="Beintema J.J."/>
        </authorList>
    </citation>
    <scope>VARIANT GLN-103</scope>
</reference>
<dbReference type="EC" id="4.6.1.18"/>
<dbReference type="PIR" id="A00815">
    <property type="entry name" value="NRCM"/>
</dbReference>
<dbReference type="PIR" id="A90229">
    <property type="entry name" value="NRCMM"/>
</dbReference>
<dbReference type="SMR" id="P67928"/>
<dbReference type="STRING" id="9838.ENSCDRP00005002599"/>
<dbReference type="GO" id="GO:0005576">
    <property type="term" value="C:extracellular region"/>
    <property type="evidence" value="ECO:0007669"/>
    <property type="project" value="UniProtKB-SubCell"/>
</dbReference>
<dbReference type="GO" id="GO:0016829">
    <property type="term" value="F:lyase activity"/>
    <property type="evidence" value="ECO:0007669"/>
    <property type="project" value="UniProtKB-KW"/>
</dbReference>
<dbReference type="GO" id="GO:0003676">
    <property type="term" value="F:nucleic acid binding"/>
    <property type="evidence" value="ECO:0007669"/>
    <property type="project" value="InterPro"/>
</dbReference>
<dbReference type="GO" id="GO:0004522">
    <property type="term" value="F:ribonuclease A activity"/>
    <property type="evidence" value="ECO:0007669"/>
    <property type="project" value="UniProtKB-EC"/>
</dbReference>
<dbReference type="GO" id="GO:0050830">
    <property type="term" value="P:defense response to Gram-positive bacterium"/>
    <property type="evidence" value="ECO:0007669"/>
    <property type="project" value="TreeGrafter"/>
</dbReference>
<dbReference type="CDD" id="cd06265">
    <property type="entry name" value="RNase_A_canonical"/>
    <property type="match status" value="1"/>
</dbReference>
<dbReference type="FunFam" id="3.10.130.10:FF:000001">
    <property type="entry name" value="Ribonuclease pancreatic"/>
    <property type="match status" value="1"/>
</dbReference>
<dbReference type="Gene3D" id="3.10.130.10">
    <property type="entry name" value="Ribonuclease A-like domain"/>
    <property type="match status" value="1"/>
</dbReference>
<dbReference type="InterPro" id="IPR001427">
    <property type="entry name" value="RNaseA"/>
</dbReference>
<dbReference type="InterPro" id="IPR036816">
    <property type="entry name" value="RNaseA-like_dom_sf"/>
</dbReference>
<dbReference type="InterPro" id="IPR023411">
    <property type="entry name" value="RNaseA_AS"/>
</dbReference>
<dbReference type="InterPro" id="IPR023412">
    <property type="entry name" value="RNaseA_domain"/>
</dbReference>
<dbReference type="PANTHER" id="PTHR11437">
    <property type="entry name" value="RIBONUCLEASE"/>
    <property type="match status" value="1"/>
</dbReference>
<dbReference type="PANTHER" id="PTHR11437:SF24">
    <property type="entry name" value="RIBONUCLEASE PANCREATIC"/>
    <property type="match status" value="1"/>
</dbReference>
<dbReference type="Pfam" id="PF00074">
    <property type="entry name" value="RnaseA"/>
    <property type="match status" value="1"/>
</dbReference>
<dbReference type="PRINTS" id="PR00794">
    <property type="entry name" value="RIBONUCLEASE"/>
</dbReference>
<dbReference type="SMART" id="SM00092">
    <property type="entry name" value="RNAse_Pc"/>
    <property type="match status" value="1"/>
</dbReference>
<dbReference type="SUPFAM" id="SSF54076">
    <property type="entry name" value="RNase A-like"/>
    <property type="match status" value="1"/>
</dbReference>
<dbReference type="PROSITE" id="PS00127">
    <property type="entry name" value="RNASE_PANCREATIC"/>
    <property type="match status" value="1"/>
</dbReference>
<accession>P67928</accession>
<accession>P00670</accession>
<keyword id="KW-0903">Direct protein sequencing</keyword>
<keyword id="KW-1015">Disulfide bond</keyword>
<keyword id="KW-0255">Endonuclease</keyword>
<keyword id="KW-0378">Hydrolase</keyword>
<keyword id="KW-0456">Lyase</keyword>
<keyword id="KW-0540">Nuclease</keyword>
<keyword id="KW-0964">Secreted</keyword>
<comment type="function">
    <text evidence="1">Endonuclease that catalyzes the cleavage of RNA on the 3' side of pyrimidine nucleotides. Acts on single-stranded and double-stranded RNA (By similarity).</text>
</comment>
<comment type="catalytic activity">
    <reaction>
        <text>an [RNA] containing cytidine + H2O = an [RNA]-3'-cytidine-3'-phosphate + a 5'-hydroxy-ribonucleotide-3'-[RNA].</text>
        <dbReference type="EC" id="4.6.1.18"/>
    </reaction>
</comment>
<comment type="catalytic activity">
    <reaction>
        <text>an [RNA] containing uridine + H2O = an [RNA]-3'-uridine-3'-phosphate + a 5'-hydroxy-ribonucleotide-3'-[RNA].</text>
        <dbReference type="EC" id="4.6.1.18"/>
    </reaction>
</comment>
<comment type="subunit">
    <text evidence="1">Monomer. Interacts with and forms tight 1:1 complexes with RNH1. Dimerization of two such complexes may occur. Interaction with RNH1 inhibits this protein (By similarity).</text>
</comment>
<comment type="subcellular location">
    <subcellularLocation>
        <location>Secreted</location>
    </subcellularLocation>
</comment>
<comment type="tissue specificity">
    <text>Pancreas.</text>
</comment>
<comment type="similarity">
    <text evidence="4">Belongs to the pancreatic ribonuclease family.</text>
</comment>
<sequence>SETAAEKFERQHMDSYSSSSSNSNYCNQMMKRREMTDGWCKPVNTFIHESLEDVQAVCSQKSVTCKNGQTNCHQSSTTMHITDCRETGSSKYPNCAYKASNLKKHIIIACEGNPYVPVHFDASV</sequence>